<comment type="function">
    <text evidence="2">Component of the acetyl coenzyme A carboxylase (ACC) complex. Biotin carboxylase (BC) catalyzes the carboxylation of biotin on its carrier protein (BCCP) and then the CO(2) group is transferred by the transcarboxylase to acetyl-CoA to form malonyl-CoA.</text>
</comment>
<comment type="catalytic activity">
    <reaction evidence="2">
        <text>N(6)-carboxybiotinyl-L-lysyl-[protein] + acetyl-CoA = N(6)-biotinyl-L-lysyl-[protein] + malonyl-CoA</text>
        <dbReference type="Rhea" id="RHEA:54728"/>
        <dbReference type="Rhea" id="RHEA-COMP:10505"/>
        <dbReference type="Rhea" id="RHEA-COMP:10506"/>
        <dbReference type="ChEBI" id="CHEBI:57288"/>
        <dbReference type="ChEBI" id="CHEBI:57384"/>
        <dbReference type="ChEBI" id="CHEBI:83144"/>
        <dbReference type="ChEBI" id="CHEBI:83145"/>
        <dbReference type="EC" id="2.1.3.15"/>
    </reaction>
</comment>
<comment type="cofactor">
    <cofactor evidence="2">
        <name>Zn(2+)</name>
        <dbReference type="ChEBI" id="CHEBI:29105"/>
    </cofactor>
    <text evidence="2">Binds 1 zinc ion per subunit.</text>
</comment>
<comment type="pathway">
    <text evidence="2">Lipid metabolism; malonyl-CoA biosynthesis; malonyl-CoA from acetyl-CoA: step 1/1.</text>
</comment>
<comment type="subunit">
    <text evidence="1">Acetyl-CoA carboxylase is a heterohexamer composed of biotin carboxyl carrier protein, biotin carboxylase and 2 subunits each of ACCase subunit alpha and ACCase plastid-coded subunit beta (accD).</text>
</comment>
<comment type="subcellular location">
    <subcellularLocation>
        <location evidence="2">Plastid</location>
        <location evidence="2">Chloroplast stroma</location>
    </subcellularLocation>
</comment>
<comment type="similarity">
    <text evidence="2">Belongs to the AccD/PCCB family.</text>
</comment>
<comment type="sequence caution" evidence="4">
    <conflict type="erroneous initiation">
        <sequence resource="EMBL-CDS" id="ABE47543"/>
    </conflict>
    <text>Extended N-terminus.</text>
</comment>
<accession>Q0ZJ11</accession>
<proteinExistence type="inferred from homology"/>
<protein>
    <recommendedName>
        <fullName evidence="2">Acetyl-coenzyme A carboxylase carboxyl transferase subunit beta, chloroplastic</fullName>
        <shortName evidence="2">ACCase subunit beta</shortName>
        <shortName evidence="2">Acetyl-CoA carboxylase carboxyltransferase subunit beta</shortName>
        <ecNumber evidence="2">2.1.3.15</ecNumber>
    </recommendedName>
</protein>
<dbReference type="EC" id="2.1.3.15" evidence="2"/>
<dbReference type="EMBL" id="DQ424856">
    <property type="protein sequence ID" value="ABE47543.1"/>
    <property type="status" value="ALT_INIT"/>
    <property type="molecule type" value="Genomic_DNA"/>
</dbReference>
<dbReference type="RefSeq" id="YP_567085.1">
    <property type="nucleotide sequence ID" value="NC_007957.1"/>
</dbReference>
<dbReference type="SMR" id="Q0ZJ11"/>
<dbReference type="FunCoup" id="Q0ZJ11">
    <property type="interactions" value="272"/>
</dbReference>
<dbReference type="STRING" id="29760.Q0ZJ11"/>
<dbReference type="GeneID" id="4025046"/>
<dbReference type="KEGG" id="vvi:4025046"/>
<dbReference type="InParanoid" id="Q0ZJ11"/>
<dbReference type="OrthoDB" id="10053020at2759"/>
<dbReference type="UniPathway" id="UPA00655">
    <property type="reaction ID" value="UER00711"/>
</dbReference>
<dbReference type="Proteomes" id="UP000009183">
    <property type="component" value="Chloroplast"/>
</dbReference>
<dbReference type="ExpressionAtlas" id="Q0ZJ11">
    <property type="expression patterns" value="baseline and differential"/>
</dbReference>
<dbReference type="GO" id="GO:0009317">
    <property type="term" value="C:acetyl-CoA carboxylase complex"/>
    <property type="evidence" value="ECO:0007669"/>
    <property type="project" value="InterPro"/>
</dbReference>
<dbReference type="GO" id="GO:0009570">
    <property type="term" value="C:chloroplast stroma"/>
    <property type="evidence" value="ECO:0007669"/>
    <property type="project" value="UniProtKB-SubCell"/>
</dbReference>
<dbReference type="GO" id="GO:0003989">
    <property type="term" value="F:acetyl-CoA carboxylase activity"/>
    <property type="evidence" value="ECO:0007669"/>
    <property type="project" value="InterPro"/>
</dbReference>
<dbReference type="GO" id="GO:0005524">
    <property type="term" value="F:ATP binding"/>
    <property type="evidence" value="ECO:0007669"/>
    <property type="project" value="UniProtKB-KW"/>
</dbReference>
<dbReference type="GO" id="GO:0016743">
    <property type="term" value="F:carboxyl- or carbamoyltransferase activity"/>
    <property type="evidence" value="ECO:0007669"/>
    <property type="project" value="UniProtKB-UniRule"/>
</dbReference>
<dbReference type="GO" id="GO:0008270">
    <property type="term" value="F:zinc ion binding"/>
    <property type="evidence" value="ECO:0007669"/>
    <property type="project" value="UniProtKB-UniRule"/>
</dbReference>
<dbReference type="GO" id="GO:0006633">
    <property type="term" value="P:fatty acid biosynthetic process"/>
    <property type="evidence" value="ECO:0000318"/>
    <property type="project" value="GO_Central"/>
</dbReference>
<dbReference type="GO" id="GO:2001295">
    <property type="term" value="P:malonyl-CoA biosynthetic process"/>
    <property type="evidence" value="ECO:0007669"/>
    <property type="project" value="UniProtKB-UniRule"/>
</dbReference>
<dbReference type="Gene3D" id="3.90.226.10">
    <property type="entry name" value="2-enoyl-CoA Hydratase, Chain A, domain 1"/>
    <property type="match status" value="1"/>
</dbReference>
<dbReference type="HAMAP" id="MF_01395">
    <property type="entry name" value="AcetylCoA_CT_beta"/>
    <property type="match status" value="1"/>
</dbReference>
<dbReference type="InterPro" id="IPR034733">
    <property type="entry name" value="AcCoA_carboxyl_beta"/>
</dbReference>
<dbReference type="InterPro" id="IPR000438">
    <property type="entry name" value="Acetyl_CoA_COase_Trfase_b_su"/>
</dbReference>
<dbReference type="InterPro" id="IPR029045">
    <property type="entry name" value="ClpP/crotonase-like_dom_sf"/>
</dbReference>
<dbReference type="InterPro" id="IPR011762">
    <property type="entry name" value="COA_CT_N"/>
</dbReference>
<dbReference type="NCBIfam" id="TIGR00515">
    <property type="entry name" value="accD"/>
    <property type="match status" value="1"/>
</dbReference>
<dbReference type="PANTHER" id="PTHR42995">
    <property type="entry name" value="ACETYL-COENZYME A CARBOXYLASE CARBOXYL TRANSFERASE SUBUNIT BETA, CHLOROPLASTIC"/>
    <property type="match status" value="1"/>
</dbReference>
<dbReference type="PANTHER" id="PTHR42995:SF5">
    <property type="entry name" value="ACETYL-COENZYME A CARBOXYLASE CARBOXYL TRANSFERASE SUBUNIT BETA, CHLOROPLASTIC"/>
    <property type="match status" value="1"/>
</dbReference>
<dbReference type="Pfam" id="PF01039">
    <property type="entry name" value="Carboxyl_trans"/>
    <property type="match status" value="1"/>
</dbReference>
<dbReference type="PRINTS" id="PR01070">
    <property type="entry name" value="ACCCTRFRASEB"/>
</dbReference>
<dbReference type="SUPFAM" id="SSF52096">
    <property type="entry name" value="ClpP/crotonase"/>
    <property type="match status" value="1"/>
</dbReference>
<dbReference type="PROSITE" id="PS50980">
    <property type="entry name" value="COA_CT_NTER"/>
    <property type="match status" value="1"/>
</dbReference>
<gene>
    <name evidence="2" type="primary">accD</name>
</gene>
<feature type="chain" id="PRO_0000359167" description="Acetyl-coenzyme A carboxylase carboxyl transferase subunit beta, chloroplastic">
    <location>
        <begin position="1"/>
        <end position="491"/>
    </location>
</feature>
<feature type="domain" description="CoA carboxyltransferase N-terminal" evidence="3">
    <location>
        <begin position="224"/>
        <end position="491"/>
    </location>
</feature>
<feature type="zinc finger region" description="C4-type" evidence="2">
    <location>
        <begin position="228"/>
        <end position="250"/>
    </location>
</feature>
<feature type="binding site" evidence="2">
    <location>
        <position position="228"/>
    </location>
    <ligand>
        <name>Zn(2+)</name>
        <dbReference type="ChEBI" id="CHEBI:29105"/>
    </ligand>
</feature>
<feature type="binding site" evidence="2">
    <location>
        <position position="231"/>
    </location>
    <ligand>
        <name>Zn(2+)</name>
        <dbReference type="ChEBI" id="CHEBI:29105"/>
    </ligand>
</feature>
<feature type="binding site" evidence="2">
    <location>
        <position position="247"/>
    </location>
    <ligand>
        <name>Zn(2+)</name>
        <dbReference type="ChEBI" id="CHEBI:29105"/>
    </ligand>
</feature>
<feature type="binding site" evidence="2">
    <location>
        <position position="250"/>
    </location>
    <ligand>
        <name>Zn(2+)</name>
        <dbReference type="ChEBI" id="CHEBI:29105"/>
    </ligand>
</feature>
<geneLocation type="chloroplast"/>
<reference key="1">
    <citation type="journal article" date="2006" name="BMC Evol. Biol.">
        <title>Phylogenetic analyses of Vitis (Vitaceae) based on complete chloroplast genome sequences: effects of taxon sampling and phylogenetic methods on resolving relationships among rosids.</title>
        <authorList>
            <person name="Jansen R.K."/>
            <person name="Kaittanis C."/>
            <person name="Lee S.-B."/>
            <person name="Saski C."/>
            <person name="Tomkins J."/>
            <person name="Alverson A.J."/>
            <person name="Daniell H."/>
        </authorList>
    </citation>
    <scope>NUCLEOTIDE SEQUENCE [LARGE SCALE GENOMIC DNA]</scope>
    <source>
        <strain>cv. Maxxa</strain>
    </source>
</reference>
<name>ACCD_VITVI</name>
<sequence length="491" mass="55874">MEKWWFNSMLSNEKLEYRCGLSKSTDSPDPIENTSGSEDRVINNTDKNINNWSQIKSSSYSNVDHLFGIRDIRNFISDDTFLVRDRNGVSYFIYFDIENQIFEIDNDQSFLSELESFFYSYRNSSYLNNVNSSYLNNVSKSNHPHYDRYMYDTKYSWNKHINSCINNYILSGSNNYSDSYIYSYICGQSRTRSEHGSSSKQTSTNGSDLKSSNVLYVAQKYRHLWIQCENCYGLNYKKNLKSKINICEQCGYHLKMSSSDRIELSIDPGTWDPVDEDMVSLDPIEFHSGEEPYKERIDFYQRKTGLTEAVQTGTGQLNGIPVAIGVMDFQFMGGSMGSVVGEKITRLIEYATNEFLPLILVCSSGGARMQEGSLSLMQMAKISSALYDYQSNKKLFYVSILTSPTTGGVTASFGMLGDIIIAEPNSYIAFAGKRVIEQTLKKTVPEGSQAAEYLFHKGLFDPIVPRNTLKGVLSELFQLHAFFPLNPKKIK</sequence>
<evidence type="ECO:0000250" key="1"/>
<evidence type="ECO:0000255" key="2">
    <source>
        <dbReference type="HAMAP-Rule" id="MF_01395"/>
    </source>
</evidence>
<evidence type="ECO:0000255" key="3">
    <source>
        <dbReference type="PROSITE-ProRule" id="PRU01136"/>
    </source>
</evidence>
<evidence type="ECO:0000305" key="4"/>
<organism>
    <name type="scientific">Vitis vinifera</name>
    <name type="common">Grape</name>
    <dbReference type="NCBI Taxonomy" id="29760"/>
    <lineage>
        <taxon>Eukaryota</taxon>
        <taxon>Viridiplantae</taxon>
        <taxon>Streptophyta</taxon>
        <taxon>Embryophyta</taxon>
        <taxon>Tracheophyta</taxon>
        <taxon>Spermatophyta</taxon>
        <taxon>Magnoliopsida</taxon>
        <taxon>eudicotyledons</taxon>
        <taxon>Gunneridae</taxon>
        <taxon>Pentapetalae</taxon>
        <taxon>rosids</taxon>
        <taxon>Vitales</taxon>
        <taxon>Vitaceae</taxon>
        <taxon>Viteae</taxon>
        <taxon>Vitis</taxon>
    </lineage>
</organism>
<keyword id="KW-0067">ATP-binding</keyword>
<keyword id="KW-0150">Chloroplast</keyword>
<keyword id="KW-0275">Fatty acid biosynthesis</keyword>
<keyword id="KW-0276">Fatty acid metabolism</keyword>
<keyword id="KW-0444">Lipid biosynthesis</keyword>
<keyword id="KW-0443">Lipid metabolism</keyword>
<keyword id="KW-0479">Metal-binding</keyword>
<keyword id="KW-0547">Nucleotide-binding</keyword>
<keyword id="KW-0934">Plastid</keyword>
<keyword id="KW-1185">Reference proteome</keyword>
<keyword id="KW-0808">Transferase</keyword>
<keyword id="KW-0862">Zinc</keyword>
<keyword id="KW-0863">Zinc-finger</keyword>